<evidence type="ECO:0000255" key="1"/>
<evidence type="ECO:0000256" key="2">
    <source>
        <dbReference type="SAM" id="MobiDB-lite"/>
    </source>
</evidence>
<evidence type="ECO:0000305" key="3"/>
<accession>Q10042</accession>
<proteinExistence type="inferred from homology"/>
<keyword id="KW-1003">Cell membrane</keyword>
<keyword id="KW-0297">G-protein coupled receptor</keyword>
<keyword id="KW-0325">Glycoprotein</keyword>
<keyword id="KW-0472">Membrane</keyword>
<keyword id="KW-0675">Receptor</keyword>
<keyword id="KW-1185">Reference proteome</keyword>
<keyword id="KW-0807">Transducer</keyword>
<keyword id="KW-0812">Transmembrane</keyword>
<keyword id="KW-1133">Transmembrane helix</keyword>
<dbReference type="EMBL" id="FO081128">
    <property type="protein sequence ID" value="CCD69326.1"/>
    <property type="molecule type" value="Genomic_DNA"/>
</dbReference>
<dbReference type="PIR" id="T16513">
    <property type="entry name" value="T16513"/>
</dbReference>
<dbReference type="RefSeq" id="NP_509462.3">
    <property type="nucleotide sequence ID" value="NM_077061.7"/>
</dbReference>
<dbReference type="SMR" id="Q10042"/>
<dbReference type="BioGRID" id="51547">
    <property type="interactions" value="2"/>
</dbReference>
<dbReference type="FunCoup" id="Q10042">
    <property type="interactions" value="232"/>
</dbReference>
<dbReference type="STRING" id="6239.K01A12.3.1"/>
<dbReference type="PaxDb" id="6239-K01A12.3"/>
<dbReference type="EnsemblMetazoa" id="K01A12.3.1">
    <property type="protein sequence ID" value="K01A12.3.1"/>
    <property type="gene ID" value="WBGene00019287"/>
</dbReference>
<dbReference type="GeneID" id="186832"/>
<dbReference type="KEGG" id="cel:CELE_K01A12.3"/>
<dbReference type="UCSC" id="K01A12.3">
    <property type="organism name" value="c. elegans"/>
</dbReference>
<dbReference type="AGR" id="WB:WBGene00019287"/>
<dbReference type="CTD" id="186832"/>
<dbReference type="WormBase" id="K01A12.3">
    <property type="protein sequence ID" value="CE40086"/>
    <property type="gene ID" value="WBGene00019287"/>
</dbReference>
<dbReference type="eggNOG" id="ENOG502RETG">
    <property type="taxonomic scope" value="Eukaryota"/>
</dbReference>
<dbReference type="HOGENOM" id="CLU_540032_0_0_1"/>
<dbReference type="InParanoid" id="Q10042"/>
<dbReference type="OMA" id="YPSILCT"/>
<dbReference type="OrthoDB" id="5873683at2759"/>
<dbReference type="PRO" id="PR:Q10042"/>
<dbReference type="Proteomes" id="UP000001940">
    <property type="component" value="Chromosome X"/>
</dbReference>
<dbReference type="Bgee" id="WBGene00019287">
    <property type="expression patterns" value="Expressed in larva and 2 other cell types or tissues"/>
</dbReference>
<dbReference type="GO" id="GO:0005886">
    <property type="term" value="C:plasma membrane"/>
    <property type="evidence" value="ECO:0000318"/>
    <property type="project" value="GO_Central"/>
</dbReference>
<dbReference type="GO" id="GO:0004930">
    <property type="term" value="F:G protein-coupled receptor activity"/>
    <property type="evidence" value="ECO:0000318"/>
    <property type="project" value="GO_Central"/>
</dbReference>
<dbReference type="GO" id="GO:0007186">
    <property type="term" value="P:G protein-coupled receptor signaling pathway"/>
    <property type="evidence" value="ECO:0000318"/>
    <property type="project" value="GO_Central"/>
</dbReference>
<dbReference type="CDD" id="cd00637">
    <property type="entry name" value="7tm_classA_rhodopsin-like"/>
    <property type="match status" value="1"/>
</dbReference>
<dbReference type="Gene3D" id="1.20.1070.10">
    <property type="entry name" value="Rhodopsin 7-helix transmembrane proteins"/>
    <property type="match status" value="1"/>
</dbReference>
<dbReference type="InterPro" id="IPR000276">
    <property type="entry name" value="GPCR_Rhodpsn"/>
</dbReference>
<dbReference type="PANTHER" id="PTHR24246:SF49">
    <property type="entry name" value="G-PROTEIN COUPLED RECEPTOR K01A12.3-RELATED"/>
    <property type="match status" value="1"/>
</dbReference>
<dbReference type="PANTHER" id="PTHR24246">
    <property type="entry name" value="OLFACTORY RECEPTOR AND ADENOSINE RECEPTOR"/>
    <property type="match status" value="1"/>
</dbReference>
<dbReference type="PRINTS" id="PR00237">
    <property type="entry name" value="GPCRRHODOPSN"/>
</dbReference>
<dbReference type="SUPFAM" id="SSF81321">
    <property type="entry name" value="Family A G protein-coupled receptor-like"/>
    <property type="match status" value="1"/>
</dbReference>
<feature type="chain" id="PRO_0000065391" description="Probable G-protein coupled receptor K01A12.3">
    <location>
        <begin position="1"/>
        <end position="496"/>
    </location>
</feature>
<feature type="topological domain" description="Extracellular" evidence="1">
    <location>
        <begin position="1"/>
        <end position="19"/>
    </location>
</feature>
<feature type="transmembrane region" description="Helical; Name=1" evidence="1">
    <location>
        <begin position="20"/>
        <end position="40"/>
    </location>
</feature>
<feature type="topological domain" description="Cytoplasmic" evidence="1">
    <location>
        <begin position="41"/>
        <end position="58"/>
    </location>
</feature>
<feature type="transmembrane region" description="Helical; Name=2" evidence="1">
    <location>
        <begin position="59"/>
        <end position="79"/>
    </location>
</feature>
<feature type="topological domain" description="Extracellular" evidence="1">
    <location>
        <begin position="80"/>
        <end position="128"/>
    </location>
</feature>
<feature type="transmembrane region" description="Helical; Name=3" evidence="1">
    <location>
        <begin position="129"/>
        <end position="149"/>
    </location>
</feature>
<feature type="topological domain" description="Cytoplasmic" evidence="1">
    <location>
        <begin position="150"/>
        <end position="169"/>
    </location>
</feature>
<feature type="transmembrane region" description="Helical; Name=4" evidence="1">
    <location>
        <begin position="170"/>
        <end position="190"/>
    </location>
</feature>
<feature type="topological domain" description="Extracellular" evidence="1">
    <location>
        <begin position="191"/>
        <end position="216"/>
    </location>
</feature>
<feature type="transmembrane region" description="Helical; Name=5" evidence="1">
    <location>
        <begin position="217"/>
        <end position="237"/>
    </location>
</feature>
<feature type="topological domain" description="Cytoplasmic" evidence="1">
    <location>
        <begin position="238"/>
        <end position="285"/>
    </location>
</feature>
<feature type="transmembrane region" description="Helical; Name=6" evidence="1">
    <location>
        <begin position="286"/>
        <end position="306"/>
    </location>
</feature>
<feature type="topological domain" description="Extracellular" evidence="1">
    <location>
        <begin position="307"/>
        <end position="318"/>
    </location>
</feature>
<feature type="transmembrane region" description="Helical; Name=7" evidence="1">
    <location>
        <begin position="319"/>
        <end position="339"/>
    </location>
</feature>
<feature type="topological domain" description="Cytoplasmic" evidence="1">
    <location>
        <begin position="340"/>
        <end position="496"/>
    </location>
</feature>
<feature type="region of interest" description="Disordered" evidence="2">
    <location>
        <begin position="451"/>
        <end position="470"/>
    </location>
</feature>
<feature type="glycosylation site" description="N-linked (GlcNAc...) asparagine" evidence="1">
    <location>
        <position position="111"/>
    </location>
</feature>
<name>YRC3_CAEEL</name>
<organism>
    <name type="scientific">Caenorhabditis elegans</name>
    <dbReference type="NCBI Taxonomy" id="6239"/>
    <lineage>
        <taxon>Eukaryota</taxon>
        <taxon>Metazoa</taxon>
        <taxon>Ecdysozoa</taxon>
        <taxon>Nematoda</taxon>
        <taxon>Chromadorea</taxon>
        <taxon>Rhabditida</taxon>
        <taxon>Rhabditina</taxon>
        <taxon>Rhabditomorpha</taxon>
        <taxon>Rhabditoidea</taxon>
        <taxon>Rhabditidae</taxon>
        <taxon>Peloderinae</taxon>
        <taxon>Caenorhabditis</taxon>
    </lineage>
</organism>
<comment type="subcellular location">
    <subcellularLocation>
        <location evidence="3">Cell membrane</location>
        <topology evidence="3">Multi-pass membrane protein</topology>
    </subcellularLocation>
</comment>
<comment type="similarity">
    <text evidence="3">Belongs to the G-protein coupled receptor 1 family.</text>
</comment>
<sequence length="496" mass="55855">MESVTRHRADMISFFTFDSYISIVGVAYTAVGLLGVFCNVTTVIMILTNRVFRLSAYTIMANVALADSIVMLIAGVACGMDVMWPNPNDLTSFIPSLEEPYQKIAPVSLRNDSKTDSSAAGFETGNIHAVLSFSFVAAWTAGVISYAMLGTNRCIAICYYGTKARALNQVSVAVACSASTWIVGIAAALVGTLSQPMIGIQRTMWSISFLEPRPHTTLFFTLLCAANLLGLGAQWVCSTLVLLKIRQVKKKISKNKLNQNSANRFRKQVILALNEIIVTGNFKARLTFQFFYPSILCTISTFLFFIKPYAFEYLSGWQLVILHLLWLCNHTCNPFIYAYFNDRMRLTYKEILTCAAIRYQIRKRRSSHPFRMHGRHNVSKRSNAAGMKSTRISARSGRTNRDGNFVRNSLQMQSRDFEQLCEFIMRVNPLYDSSEGWRESSDDEPFQPEFTKELESAHNQGGSSRFDSEREAKSIVLDLGRQTVEHWVKFAKKASI</sequence>
<reference key="1">
    <citation type="journal article" date="1998" name="Science">
        <title>Genome sequence of the nematode C. elegans: a platform for investigating biology.</title>
        <authorList>
            <consortium name="The C. elegans sequencing consortium"/>
        </authorList>
    </citation>
    <scope>NUCLEOTIDE SEQUENCE [LARGE SCALE GENOMIC DNA]</scope>
    <source>
        <strain>Bristol N2</strain>
    </source>
</reference>
<protein>
    <recommendedName>
        <fullName>Probable G-protein coupled receptor K01A12.3</fullName>
    </recommendedName>
</protein>
<gene>
    <name type="ORF">K01A12.3</name>
</gene>